<dbReference type="EC" id="2.7.1.71" evidence="1"/>
<dbReference type="EMBL" id="CP000308">
    <property type="protein sequence ID" value="ABG15280.1"/>
    <property type="molecule type" value="Genomic_DNA"/>
</dbReference>
<dbReference type="RefSeq" id="WP_002208899.1">
    <property type="nucleotide sequence ID" value="NZ_CP009906.1"/>
</dbReference>
<dbReference type="SMR" id="Q1C2P2"/>
<dbReference type="GeneID" id="96663260"/>
<dbReference type="KEGG" id="ypa:YPA_3318"/>
<dbReference type="UniPathway" id="UPA00053">
    <property type="reaction ID" value="UER00088"/>
</dbReference>
<dbReference type="Proteomes" id="UP000001971">
    <property type="component" value="Chromosome"/>
</dbReference>
<dbReference type="GO" id="GO:0005829">
    <property type="term" value="C:cytosol"/>
    <property type="evidence" value="ECO:0007669"/>
    <property type="project" value="TreeGrafter"/>
</dbReference>
<dbReference type="GO" id="GO:0005524">
    <property type="term" value="F:ATP binding"/>
    <property type="evidence" value="ECO:0007669"/>
    <property type="project" value="UniProtKB-UniRule"/>
</dbReference>
<dbReference type="GO" id="GO:0000287">
    <property type="term" value="F:magnesium ion binding"/>
    <property type="evidence" value="ECO:0007669"/>
    <property type="project" value="UniProtKB-UniRule"/>
</dbReference>
<dbReference type="GO" id="GO:0004765">
    <property type="term" value="F:shikimate kinase activity"/>
    <property type="evidence" value="ECO:0007669"/>
    <property type="project" value="UniProtKB-UniRule"/>
</dbReference>
<dbReference type="GO" id="GO:0008652">
    <property type="term" value="P:amino acid biosynthetic process"/>
    <property type="evidence" value="ECO:0007669"/>
    <property type="project" value="UniProtKB-KW"/>
</dbReference>
<dbReference type="GO" id="GO:0009073">
    <property type="term" value="P:aromatic amino acid family biosynthetic process"/>
    <property type="evidence" value="ECO:0007669"/>
    <property type="project" value="UniProtKB-KW"/>
</dbReference>
<dbReference type="GO" id="GO:0009423">
    <property type="term" value="P:chorismate biosynthetic process"/>
    <property type="evidence" value="ECO:0007669"/>
    <property type="project" value="UniProtKB-UniRule"/>
</dbReference>
<dbReference type="CDD" id="cd00464">
    <property type="entry name" value="SK"/>
    <property type="match status" value="1"/>
</dbReference>
<dbReference type="FunFam" id="3.40.50.300:FF:000099">
    <property type="entry name" value="Shikimate kinase 1"/>
    <property type="match status" value="1"/>
</dbReference>
<dbReference type="Gene3D" id="3.40.50.300">
    <property type="entry name" value="P-loop containing nucleotide triphosphate hydrolases"/>
    <property type="match status" value="1"/>
</dbReference>
<dbReference type="HAMAP" id="MF_00109">
    <property type="entry name" value="Shikimate_kinase"/>
    <property type="match status" value="1"/>
</dbReference>
<dbReference type="InterPro" id="IPR027417">
    <property type="entry name" value="P-loop_NTPase"/>
</dbReference>
<dbReference type="InterPro" id="IPR031322">
    <property type="entry name" value="Shikimate/glucono_kinase"/>
</dbReference>
<dbReference type="InterPro" id="IPR000623">
    <property type="entry name" value="Shikimate_kinase/TSH1"/>
</dbReference>
<dbReference type="InterPro" id="IPR023000">
    <property type="entry name" value="Shikimate_kinase_CS"/>
</dbReference>
<dbReference type="NCBIfam" id="NF003456">
    <property type="entry name" value="PRK05057.1"/>
    <property type="match status" value="1"/>
</dbReference>
<dbReference type="PANTHER" id="PTHR21087">
    <property type="entry name" value="SHIKIMATE KINASE"/>
    <property type="match status" value="1"/>
</dbReference>
<dbReference type="PANTHER" id="PTHR21087:SF16">
    <property type="entry name" value="SHIKIMATE KINASE 1, CHLOROPLASTIC"/>
    <property type="match status" value="1"/>
</dbReference>
<dbReference type="Pfam" id="PF01202">
    <property type="entry name" value="SKI"/>
    <property type="match status" value="1"/>
</dbReference>
<dbReference type="PRINTS" id="PR01100">
    <property type="entry name" value="SHIKIMTKNASE"/>
</dbReference>
<dbReference type="SUPFAM" id="SSF52540">
    <property type="entry name" value="P-loop containing nucleoside triphosphate hydrolases"/>
    <property type="match status" value="1"/>
</dbReference>
<dbReference type="PROSITE" id="PS01128">
    <property type="entry name" value="SHIKIMATE_KINASE"/>
    <property type="match status" value="1"/>
</dbReference>
<protein>
    <recommendedName>
        <fullName evidence="1">Shikimate kinase 1</fullName>
        <shortName evidence="1">SK 1</shortName>
        <ecNumber evidence="1">2.7.1.71</ecNumber>
    </recommendedName>
</protein>
<organism>
    <name type="scientific">Yersinia pestis bv. Antiqua (strain Antiqua)</name>
    <dbReference type="NCBI Taxonomy" id="360102"/>
    <lineage>
        <taxon>Bacteria</taxon>
        <taxon>Pseudomonadati</taxon>
        <taxon>Pseudomonadota</taxon>
        <taxon>Gammaproteobacteria</taxon>
        <taxon>Enterobacterales</taxon>
        <taxon>Yersiniaceae</taxon>
        <taxon>Yersinia</taxon>
    </lineage>
</organism>
<sequence length="173" mass="19532">MAEKRNIFLVGPMGAGKSTIGRQLAQQLNMEFFDSDQEIERRTGADVGWVFDVEGEEGFRDREEKVINELTEKQGIVLATGGGSVKSRETRNRLSARGVVVYLETTIEKQLARTQRDKKRPLLQVDEPPREVLEALAKERNPLYEEIADVTIRTDDQSAKVVANQIINMLESN</sequence>
<proteinExistence type="inferred from homology"/>
<feature type="chain" id="PRO_1000023007" description="Shikimate kinase 1">
    <location>
        <begin position="1"/>
        <end position="173"/>
    </location>
</feature>
<feature type="binding site" evidence="1">
    <location>
        <begin position="14"/>
        <end position="19"/>
    </location>
    <ligand>
        <name>ATP</name>
        <dbReference type="ChEBI" id="CHEBI:30616"/>
    </ligand>
</feature>
<feature type="binding site" evidence="1">
    <location>
        <position position="18"/>
    </location>
    <ligand>
        <name>Mg(2+)</name>
        <dbReference type="ChEBI" id="CHEBI:18420"/>
    </ligand>
</feature>
<feature type="binding site" evidence="1">
    <location>
        <position position="36"/>
    </location>
    <ligand>
        <name>substrate</name>
    </ligand>
</feature>
<feature type="binding site" evidence="1">
    <location>
        <position position="60"/>
    </location>
    <ligand>
        <name>substrate</name>
    </ligand>
</feature>
<feature type="binding site" evidence="1">
    <location>
        <position position="82"/>
    </location>
    <ligand>
        <name>substrate</name>
    </ligand>
</feature>
<feature type="binding site" evidence="1">
    <location>
        <position position="120"/>
    </location>
    <ligand>
        <name>ATP</name>
        <dbReference type="ChEBI" id="CHEBI:30616"/>
    </ligand>
</feature>
<feature type="binding site" evidence="1">
    <location>
        <position position="140"/>
    </location>
    <ligand>
        <name>substrate</name>
    </ligand>
</feature>
<feature type="binding site" evidence="1">
    <location>
        <position position="157"/>
    </location>
    <ligand>
        <name>ATP</name>
        <dbReference type="ChEBI" id="CHEBI:30616"/>
    </ligand>
</feature>
<name>AROK_YERPA</name>
<accession>Q1C2P2</accession>
<gene>
    <name evidence="1" type="primary">aroK</name>
    <name type="ordered locus">YPA_3318</name>
</gene>
<keyword id="KW-0028">Amino-acid biosynthesis</keyword>
<keyword id="KW-0057">Aromatic amino acid biosynthesis</keyword>
<keyword id="KW-0067">ATP-binding</keyword>
<keyword id="KW-0963">Cytoplasm</keyword>
<keyword id="KW-0418">Kinase</keyword>
<keyword id="KW-0460">Magnesium</keyword>
<keyword id="KW-0479">Metal-binding</keyword>
<keyword id="KW-0547">Nucleotide-binding</keyword>
<keyword id="KW-0808">Transferase</keyword>
<comment type="function">
    <text evidence="1">Catalyzes the specific phosphorylation of the 3-hydroxyl group of shikimic acid using ATP as a cosubstrate.</text>
</comment>
<comment type="catalytic activity">
    <reaction evidence="1">
        <text>shikimate + ATP = 3-phosphoshikimate + ADP + H(+)</text>
        <dbReference type="Rhea" id="RHEA:13121"/>
        <dbReference type="ChEBI" id="CHEBI:15378"/>
        <dbReference type="ChEBI" id="CHEBI:30616"/>
        <dbReference type="ChEBI" id="CHEBI:36208"/>
        <dbReference type="ChEBI" id="CHEBI:145989"/>
        <dbReference type="ChEBI" id="CHEBI:456216"/>
        <dbReference type="EC" id="2.7.1.71"/>
    </reaction>
</comment>
<comment type="cofactor">
    <cofactor evidence="1">
        <name>Mg(2+)</name>
        <dbReference type="ChEBI" id="CHEBI:18420"/>
    </cofactor>
    <text evidence="1">Binds 1 Mg(2+) ion per subunit.</text>
</comment>
<comment type="pathway">
    <text evidence="1">Metabolic intermediate biosynthesis; chorismate biosynthesis; chorismate from D-erythrose 4-phosphate and phosphoenolpyruvate: step 5/7.</text>
</comment>
<comment type="subunit">
    <text evidence="1">Monomer.</text>
</comment>
<comment type="subcellular location">
    <subcellularLocation>
        <location evidence="1">Cytoplasm</location>
    </subcellularLocation>
</comment>
<comment type="similarity">
    <text evidence="1">Belongs to the shikimate kinase family.</text>
</comment>
<reference key="1">
    <citation type="journal article" date="2006" name="J. Bacteriol.">
        <title>Complete genome sequence of Yersinia pestis strains Antiqua and Nepal516: evidence of gene reduction in an emerging pathogen.</title>
        <authorList>
            <person name="Chain P.S.G."/>
            <person name="Hu P."/>
            <person name="Malfatti S.A."/>
            <person name="Radnedge L."/>
            <person name="Larimer F."/>
            <person name="Vergez L.M."/>
            <person name="Worsham P."/>
            <person name="Chu M.C."/>
            <person name="Andersen G.L."/>
        </authorList>
    </citation>
    <scope>NUCLEOTIDE SEQUENCE [LARGE SCALE GENOMIC DNA]</scope>
    <source>
        <strain>Antiqua</strain>
    </source>
</reference>
<evidence type="ECO:0000255" key="1">
    <source>
        <dbReference type="HAMAP-Rule" id="MF_00109"/>
    </source>
</evidence>